<dbReference type="GO" id="GO:0005576">
    <property type="term" value="C:extracellular region"/>
    <property type="evidence" value="ECO:0007669"/>
    <property type="project" value="UniProtKB-SubCell"/>
</dbReference>
<dbReference type="GO" id="GO:0007218">
    <property type="term" value="P:neuropeptide signaling pathway"/>
    <property type="evidence" value="ECO:0007669"/>
    <property type="project" value="UniProtKB-KW"/>
</dbReference>
<dbReference type="InterPro" id="IPR013231">
    <property type="entry name" value="Periviscerokinin"/>
</dbReference>
<dbReference type="Pfam" id="PF08259">
    <property type="entry name" value="Periviscerokin"/>
    <property type="match status" value="1"/>
</dbReference>
<keyword id="KW-0027">Amidation</keyword>
<keyword id="KW-0903">Direct protein sequencing</keyword>
<keyword id="KW-0527">Neuropeptide</keyword>
<keyword id="KW-0964">Secreted</keyword>
<protein>
    <recommendedName>
        <fullName evidence="3">Periviscerokinin-1</fullName>
        <shortName evidence="3">PolAe-PVK-1</shortName>
    </recommendedName>
</protein>
<organism>
    <name type="scientific">Polyphaga aegyptiaca</name>
    <name type="common">Egyptian desert roach</name>
    <dbReference type="NCBI Taxonomy" id="7085"/>
    <lineage>
        <taxon>Eukaryota</taxon>
        <taxon>Metazoa</taxon>
        <taxon>Ecdysozoa</taxon>
        <taxon>Arthropoda</taxon>
        <taxon>Hexapoda</taxon>
        <taxon>Insecta</taxon>
        <taxon>Pterygota</taxon>
        <taxon>Neoptera</taxon>
        <taxon>Polyneoptera</taxon>
        <taxon>Dictyoptera</taxon>
        <taxon>Blattodea</taxon>
        <taxon>Corydioidea</taxon>
        <taxon>Corydiidae</taxon>
        <taxon>Polyphaga</taxon>
    </lineage>
</organism>
<feature type="peptide" id="PRO_0000378764" description="Periviscerokinin-1" evidence="2">
    <location>
        <begin position="1"/>
        <end position="11"/>
    </location>
</feature>
<feature type="modified residue" description="Threonine amide" evidence="2">
    <location>
        <position position="11"/>
    </location>
</feature>
<evidence type="ECO:0000255" key="1"/>
<evidence type="ECO:0000269" key="2">
    <source>
    </source>
</evidence>
<evidence type="ECO:0000303" key="3">
    <source>
    </source>
</evidence>
<evidence type="ECO:0000305" key="4"/>
<sequence length="11" mass="1135">GTSGLISFPRT</sequence>
<comment type="function">
    <text evidence="4">Mediates visceral muscle contractile activity (myotropic activity).</text>
</comment>
<comment type="subcellular location">
    <subcellularLocation>
        <location evidence="4">Secreted</location>
    </subcellularLocation>
</comment>
<comment type="similarity">
    <text evidence="1">Belongs to the periviscerokinin family.</text>
</comment>
<name>PVK1_POLAY</name>
<proteinExistence type="evidence at protein level"/>
<accession>P85738</accession>
<reference evidence="4" key="1">
    <citation type="journal article" date="2009" name="BMC Evol. Biol.">
        <title>A proteomic approach for studying insect phylogeny: CAPA peptides of ancient insect taxa (Dictyoptera, Blattoptera) as a test case.</title>
        <authorList>
            <person name="Roth S."/>
            <person name="Fromm B."/>
            <person name="Gaede G."/>
            <person name="Predel R."/>
        </authorList>
    </citation>
    <scope>PROTEIN SEQUENCE</scope>
    <scope>AMIDATION AT THR-11</scope>
    <source>
        <tissue evidence="2">Abdominal perisympathetic organs</tissue>
    </source>
</reference>